<feature type="chain" id="PRO_0000457582" description="Quaternary-amine-specific corrinoid protein">
    <location>
        <begin position="1"/>
        <end position="210"/>
    </location>
</feature>
<feature type="domain" description="B12-binding N-terminal" evidence="3">
    <location>
        <begin position="1"/>
        <end position="90"/>
    </location>
</feature>
<feature type="domain" description="B12-binding" evidence="2">
    <location>
        <begin position="90"/>
        <end position="210"/>
    </location>
</feature>
<feature type="binding site" description="axial binding residue" evidence="1">
    <location>
        <position position="103"/>
    </location>
    <ligand>
        <name>methylcob(III)alamin</name>
        <dbReference type="ChEBI" id="CHEBI:28115"/>
    </ligand>
    <ligandPart>
        <name>Co</name>
        <dbReference type="ChEBI" id="CHEBI:27638"/>
    </ligandPart>
</feature>
<name>MTQC_EUBLI</name>
<reference key="1">
    <citation type="journal article" date="2017" name="Sci. Rep.">
        <title>Determination of the Genome and Primary Transcriptome of Syngas Fermenting Eubacterium limosum ATCC 8486.</title>
        <authorList>
            <person name="Song Y."/>
            <person name="Shin J."/>
            <person name="Jeong Y."/>
            <person name="Jin S."/>
            <person name="Lee J.K."/>
            <person name="Kim D.R."/>
            <person name="Kim S.C."/>
            <person name="Cho S."/>
            <person name="Cho B.K."/>
        </authorList>
    </citation>
    <scope>NUCLEOTIDE SEQUENCE [LARGE SCALE GENOMIC DNA]</scope>
    <source>
        <strain>ATCC 8486</strain>
    </source>
</reference>
<reference key="2">
    <citation type="journal article" date="2019" name="J. Biol. Chem.">
        <title>MtpB, a member of the MttB superfamily from the human intestinal acetogen Eubacterium limosum, catalyzes proline betaine demethylation.</title>
        <authorList>
            <person name="Picking J.W."/>
            <person name="Behrman E.J."/>
            <person name="Zhang L."/>
            <person name="Krzycki J.A."/>
        </authorList>
    </citation>
    <scope>FUNCTION</scope>
    <scope>SUBUNIT</scope>
    <scope>INDUCTION</scope>
    <source>
        <strain>ATCC 8486</strain>
    </source>
</reference>
<reference key="3">
    <citation type="journal article" date="2020" name="J. Biol. Chem.">
        <title>MtcB, a member of the MttB superfamily from the human gut acetogen Eubacterium limosum, is a cobalamin-dependent carnitine demethylase.</title>
        <authorList>
            <person name="Kountz D.J."/>
            <person name="Behrman E.J."/>
            <person name="Zhang L."/>
            <person name="Krzycki J.A."/>
        </authorList>
    </citation>
    <scope>FUNCTION</scope>
    <scope>SUBUNIT</scope>
    <scope>INDUCTION</scope>
    <source>
        <strain>ATCC 8486</strain>
    </source>
</reference>
<accession>P0DX07</accession>
<evidence type="ECO:0000250" key="1">
    <source>
        <dbReference type="UniProtKB" id="Q46EH4"/>
    </source>
</evidence>
<evidence type="ECO:0000255" key="2">
    <source>
        <dbReference type="PROSITE-ProRule" id="PRU00666"/>
    </source>
</evidence>
<evidence type="ECO:0000255" key="3">
    <source>
        <dbReference type="PROSITE-ProRule" id="PRU00667"/>
    </source>
</evidence>
<evidence type="ECO:0000269" key="4">
    <source>
    </source>
</evidence>
<evidence type="ECO:0000269" key="5">
    <source>
    </source>
</evidence>
<evidence type="ECO:0000303" key="6">
    <source>
    </source>
</evidence>
<evidence type="ECO:0000303" key="7">
    <source>
    </source>
</evidence>
<evidence type="ECO:0000305" key="8"/>
<evidence type="ECO:0000312" key="9">
    <source>
        <dbReference type="EMBL" id="ARD67904.1"/>
    </source>
</evidence>
<comment type="function">
    <text evidence="4 5">Involved in the degradation of the quaternary amines L-proline betaine and L-carnitine (PubMed:31341018, PubMed:32571881). Component of a corrinoid-dependent methyltransferase system that transfers a methyl group from L-proline betaine or L-carnitine to tetrahydrofolate (THF), forming methyl-THF, a key intermediate in the Wood-Ljungdahl acetogenesis pathway (PubMed:31341018, PubMed:32571881). Acts as a methyl group carrier between MtpB or MtcB, and MtqA (PubMed:31341018, PubMed:32571881). A methyl group from L-proline betaine or L-carnitine is first transferred to the corrinoid prosthetic group of MtqC by MtpB or MtcB, respectively, and then transferred from MtqC to THF by MtqA (PubMed:31341018, PubMed:32571881).</text>
</comment>
<comment type="subunit">
    <text evidence="4 5">The proline betaine:THF methyl transfer system is composed of two methyltransferases, MtpB and MtqA, and the corrinoid protein MtqC (PubMed:31341018). The L-carnitine:THF methyl transfer system is composed of two methyltransferases, MtcB and MtqA, and the corrinoid protein MtqC (PubMed:32571881).</text>
</comment>
<comment type="induction">
    <text evidence="4 5">Up-regulated during growth on proline betaine or L-carnitine.</text>
</comment>
<comment type="similarity">
    <text evidence="8">Belongs to the methylamine corrinoid protein family.</text>
</comment>
<gene>
    <name evidence="6 7" type="primary">mtqC</name>
    <name evidence="9" type="ORF">B2M23_05775</name>
</gene>
<keyword id="KW-0170">Cobalt</keyword>
<keyword id="KW-0479">Metal-binding</keyword>
<sequence>MADWKNLTQAVGDLEEDDVMEILNDFVATNPTEAEAEEAVAACQAGMAVVGDLFEEGEYFVGDLIFAGELLTEAINVLKPVLGSGDTAVAGTILIGTAHGDLHDIGKNIFRSMAEAAGFQVTDLGIDVAIDTFVEKAKEIKPDIIGISGVLTLAIDSMKETSDALKAAGVDSKLIIGGNPVTKEACEYVGADDFTTNAAEGVKICQAWVG</sequence>
<dbReference type="EMBL" id="CP019962">
    <property type="protein sequence ID" value="ARD67904.1"/>
    <property type="molecule type" value="Genomic_DNA"/>
</dbReference>
<dbReference type="RefSeq" id="WP_038352545.1">
    <property type="nucleotide sequence ID" value="NZ_QGUD01000006.1"/>
</dbReference>
<dbReference type="SMR" id="P0DX07"/>
<dbReference type="KEGG" id="elim:B2M23_05775"/>
<dbReference type="OrthoDB" id="9803687at2"/>
<dbReference type="Proteomes" id="UP000192391">
    <property type="component" value="Chromosome"/>
</dbReference>
<dbReference type="GO" id="GO:0005829">
    <property type="term" value="C:cytosol"/>
    <property type="evidence" value="ECO:0007669"/>
    <property type="project" value="TreeGrafter"/>
</dbReference>
<dbReference type="GO" id="GO:0031419">
    <property type="term" value="F:cobalamin binding"/>
    <property type="evidence" value="ECO:0007669"/>
    <property type="project" value="InterPro"/>
</dbReference>
<dbReference type="GO" id="GO:0046872">
    <property type="term" value="F:metal ion binding"/>
    <property type="evidence" value="ECO:0007669"/>
    <property type="project" value="UniProtKB-KW"/>
</dbReference>
<dbReference type="GO" id="GO:0008705">
    <property type="term" value="F:methionine synthase activity"/>
    <property type="evidence" value="ECO:0007669"/>
    <property type="project" value="TreeGrafter"/>
</dbReference>
<dbReference type="GO" id="GO:0050667">
    <property type="term" value="P:homocysteine metabolic process"/>
    <property type="evidence" value="ECO:0007669"/>
    <property type="project" value="TreeGrafter"/>
</dbReference>
<dbReference type="GO" id="GO:0046653">
    <property type="term" value="P:tetrahydrofolate metabolic process"/>
    <property type="evidence" value="ECO:0007669"/>
    <property type="project" value="TreeGrafter"/>
</dbReference>
<dbReference type="Gene3D" id="3.40.50.280">
    <property type="entry name" value="Cobalamin-binding domain"/>
    <property type="match status" value="1"/>
</dbReference>
<dbReference type="Gene3D" id="1.10.1240.10">
    <property type="entry name" value="Methionine synthase domain"/>
    <property type="match status" value="1"/>
</dbReference>
<dbReference type="InterPro" id="IPR003759">
    <property type="entry name" value="Cbl-bd_cap"/>
</dbReference>
<dbReference type="InterPro" id="IPR006158">
    <property type="entry name" value="Cobalamin-bd"/>
</dbReference>
<dbReference type="InterPro" id="IPR036724">
    <property type="entry name" value="Cobalamin-bd_sf"/>
</dbReference>
<dbReference type="InterPro" id="IPR050554">
    <property type="entry name" value="Met_Synthase/Corrinoid"/>
</dbReference>
<dbReference type="InterPro" id="IPR036594">
    <property type="entry name" value="Meth_synthase_dom"/>
</dbReference>
<dbReference type="PANTHER" id="PTHR45833">
    <property type="entry name" value="METHIONINE SYNTHASE"/>
    <property type="match status" value="1"/>
</dbReference>
<dbReference type="PANTHER" id="PTHR45833:SF1">
    <property type="entry name" value="METHIONINE SYNTHASE"/>
    <property type="match status" value="1"/>
</dbReference>
<dbReference type="Pfam" id="PF02310">
    <property type="entry name" value="B12-binding"/>
    <property type="match status" value="1"/>
</dbReference>
<dbReference type="Pfam" id="PF02607">
    <property type="entry name" value="B12-binding_2"/>
    <property type="match status" value="1"/>
</dbReference>
<dbReference type="SMART" id="SM01018">
    <property type="entry name" value="B12-binding_2"/>
    <property type="match status" value="1"/>
</dbReference>
<dbReference type="SUPFAM" id="SSF52242">
    <property type="entry name" value="Cobalamin (vitamin B12)-binding domain"/>
    <property type="match status" value="1"/>
</dbReference>
<dbReference type="SUPFAM" id="SSF47644">
    <property type="entry name" value="Methionine synthase domain"/>
    <property type="match status" value="1"/>
</dbReference>
<dbReference type="PROSITE" id="PS51332">
    <property type="entry name" value="B12_BINDING"/>
    <property type="match status" value="1"/>
</dbReference>
<dbReference type="PROSITE" id="PS51337">
    <property type="entry name" value="B12_BINDING_NTER"/>
    <property type="match status" value="1"/>
</dbReference>
<organism>
    <name type="scientific">Eubacterium limosum</name>
    <dbReference type="NCBI Taxonomy" id="1736"/>
    <lineage>
        <taxon>Bacteria</taxon>
        <taxon>Bacillati</taxon>
        <taxon>Bacillota</taxon>
        <taxon>Clostridia</taxon>
        <taxon>Eubacteriales</taxon>
        <taxon>Eubacteriaceae</taxon>
        <taxon>Eubacterium</taxon>
    </lineage>
</organism>
<proteinExistence type="evidence at protein level"/>
<protein>
    <recommendedName>
        <fullName evidence="8">Quaternary-amine-specific corrinoid protein</fullName>
    </recommendedName>
    <alternativeName>
        <fullName evidence="8">Corrinoid protein MtqC</fullName>
    </alternativeName>
</protein>